<feature type="chain" id="PRO_0000243882" description="Small ribosomal subunit protein bS16">
    <location>
        <begin position="1"/>
        <end position="135"/>
    </location>
</feature>
<feature type="region of interest" description="Disordered" evidence="2">
    <location>
        <begin position="82"/>
        <end position="135"/>
    </location>
</feature>
<feature type="compositionally biased region" description="Basic and acidic residues" evidence="2">
    <location>
        <begin position="94"/>
        <end position="121"/>
    </location>
</feature>
<feature type="compositionally biased region" description="Acidic residues" evidence="2">
    <location>
        <begin position="123"/>
        <end position="135"/>
    </location>
</feature>
<proteinExistence type="inferred from homology"/>
<name>RS16_SYNSC</name>
<protein>
    <recommendedName>
        <fullName evidence="1">Small ribosomal subunit protein bS16</fullName>
    </recommendedName>
    <alternativeName>
        <fullName evidence="3">30S ribosomal protein S16</fullName>
    </alternativeName>
</protein>
<accession>Q3AL81</accession>
<gene>
    <name evidence="1" type="primary">rpsP</name>
    <name evidence="1" type="synonym">rps16</name>
    <name type="ordered locus">Syncc9605_0883</name>
</gene>
<comment type="similarity">
    <text evidence="1">Belongs to the bacterial ribosomal protein bS16 family.</text>
</comment>
<comment type="sequence caution" evidence="3">
    <conflict type="erroneous initiation">
        <sequence resource="EMBL-CDS" id="ABB34651"/>
    </conflict>
</comment>
<keyword id="KW-0687">Ribonucleoprotein</keyword>
<keyword id="KW-0689">Ribosomal protein</keyword>
<organism>
    <name type="scientific">Synechococcus sp. (strain CC9605)</name>
    <dbReference type="NCBI Taxonomy" id="110662"/>
    <lineage>
        <taxon>Bacteria</taxon>
        <taxon>Bacillati</taxon>
        <taxon>Cyanobacteriota</taxon>
        <taxon>Cyanophyceae</taxon>
        <taxon>Synechococcales</taxon>
        <taxon>Synechococcaceae</taxon>
        <taxon>Synechococcus</taxon>
    </lineage>
</organism>
<reference key="1">
    <citation type="submission" date="2005-07" db="EMBL/GenBank/DDBJ databases">
        <title>Complete sequence of Synechococcus sp. CC9605.</title>
        <authorList>
            <consortium name="US DOE Joint Genome Institute"/>
            <person name="Copeland A."/>
            <person name="Lucas S."/>
            <person name="Lapidus A."/>
            <person name="Barry K."/>
            <person name="Detter J.C."/>
            <person name="Glavina T."/>
            <person name="Hammon N."/>
            <person name="Israni S."/>
            <person name="Pitluck S."/>
            <person name="Schmutz J."/>
            <person name="Martinez M."/>
            <person name="Larimer F."/>
            <person name="Land M."/>
            <person name="Kyrpides N."/>
            <person name="Ivanova N."/>
            <person name="Richardson P."/>
        </authorList>
    </citation>
    <scope>NUCLEOTIDE SEQUENCE [LARGE SCALE GENOMIC DNA]</scope>
    <source>
        <strain>CC9605</strain>
    </source>
</reference>
<dbReference type="EMBL" id="CP000110">
    <property type="protein sequence ID" value="ABB34651.1"/>
    <property type="status" value="ALT_INIT"/>
    <property type="molecule type" value="Genomic_DNA"/>
</dbReference>
<dbReference type="RefSeq" id="WP_011363875.1">
    <property type="nucleotide sequence ID" value="NC_007516.1"/>
</dbReference>
<dbReference type="SMR" id="Q3AL81"/>
<dbReference type="STRING" id="110662.Syncc9605_0883"/>
<dbReference type="KEGG" id="syd:Syncc9605_0883"/>
<dbReference type="eggNOG" id="COG0228">
    <property type="taxonomic scope" value="Bacteria"/>
</dbReference>
<dbReference type="HOGENOM" id="CLU_100590_3_2_3"/>
<dbReference type="OrthoDB" id="9807878at2"/>
<dbReference type="GO" id="GO:0005737">
    <property type="term" value="C:cytoplasm"/>
    <property type="evidence" value="ECO:0007669"/>
    <property type="project" value="UniProtKB-ARBA"/>
</dbReference>
<dbReference type="GO" id="GO:0015935">
    <property type="term" value="C:small ribosomal subunit"/>
    <property type="evidence" value="ECO:0007669"/>
    <property type="project" value="TreeGrafter"/>
</dbReference>
<dbReference type="GO" id="GO:0003735">
    <property type="term" value="F:structural constituent of ribosome"/>
    <property type="evidence" value="ECO:0007669"/>
    <property type="project" value="InterPro"/>
</dbReference>
<dbReference type="GO" id="GO:0006412">
    <property type="term" value="P:translation"/>
    <property type="evidence" value="ECO:0007669"/>
    <property type="project" value="UniProtKB-UniRule"/>
</dbReference>
<dbReference type="Gene3D" id="3.30.1320.10">
    <property type="match status" value="1"/>
</dbReference>
<dbReference type="HAMAP" id="MF_00385">
    <property type="entry name" value="Ribosomal_bS16"/>
    <property type="match status" value="1"/>
</dbReference>
<dbReference type="InterPro" id="IPR000307">
    <property type="entry name" value="Ribosomal_bS16"/>
</dbReference>
<dbReference type="InterPro" id="IPR020592">
    <property type="entry name" value="Ribosomal_bS16_CS"/>
</dbReference>
<dbReference type="InterPro" id="IPR023803">
    <property type="entry name" value="Ribosomal_bS16_dom_sf"/>
</dbReference>
<dbReference type="NCBIfam" id="TIGR00002">
    <property type="entry name" value="S16"/>
    <property type="match status" value="1"/>
</dbReference>
<dbReference type="PANTHER" id="PTHR12919">
    <property type="entry name" value="30S RIBOSOMAL PROTEIN S16"/>
    <property type="match status" value="1"/>
</dbReference>
<dbReference type="PANTHER" id="PTHR12919:SF20">
    <property type="entry name" value="SMALL RIBOSOMAL SUBUNIT PROTEIN BS16M"/>
    <property type="match status" value="1"/>
</dbReference>
<dbReference type="Pfam" id="PF00886">
    <property type="entry name" value="Ribosomal_S16"/>
    <property type="match status" value="1"/>
</dbReference>
<dbReference type="SUPFAM" id="SSF54565">
    <property type="entry name" value="Ribosomal protein S16"/>
    <property type="match status" value="1"/>
</dbReference>
<dbReference type="PROSITE" id="PS00732">
    <property type="entry name" value="RIBOSOMAL_S16"/>
    <property type="match status" value="1"/>
</dbReference>
<evidence type="ECO:0000255" key="1">
    <source>
        <dbReference type="HAMAP-Rule" id="MF_00385"/>
    </source>
</evidence>
<evidence type="ECO:0000256" key="2">
    <source>
        <dbReference type="SAM" id="MobiDB-lite"/>
    </source>
</evidence>
<evidence type="ECO:0000305" key="3"/>
<sequence>MIKLRLKRFGKKREASFRLVACNSTSRRDGRPLQELGFYNPRTKETRLDTEAIRERLGQGAQPTDVVRTLLERGGLLEKTVRPAETVGKAKQAAKREADAKQAAKEAAEAKAAAADEKAAEAEASDSAESESTEG</sequence>